<organism>
    <name type="scientific">Cronobacter sakazakii (strain ATCC BAA-894)</name>
    <name type="common">Enterobacter sakazakii</name>
    <dbReference type="NCBI Taxonomy" id="290339"/>
    <lineage>
        <taxon>Bacteria</taxon>
        <taxon>Pseudomonadati</taxon>
        <taxon>Pseudomonadota</taxon>
        <taxon>Gammaproteobacteria</taxon>
        <taxon>Enterobacterales</taxon>
        <taxon>Enterobacteriaceae</taxon>
        <taxon>Cronobacter</taxon>
    </lineage>
</organism>
<comment type="function">
    <text evidence="1">Activates ribosomal RNA transcription. Plays a direct role in upstream activation of rRNA promoters.</text>
</comment>
<comment type="subunit">
    <text evidence="1">Homodimer.</text>
</comment>
<comment type="similarity">
    <text evidence="1">Belongs to the transcriptional regulatory Fis family.</text>
</comment>
<dbReference type="EMBL" id="CP000783">
    <property type="protein sequence ID" value="ABU78861.1"/>
    <property type="molecule type" value="Genomic_DNA"/>
</dbReference>
<dbReference type="RefSeq" id="WP_000462905.1">
    <property type="nucleotide sequence ID" value="NC_009778.1"/>
</dbReference>
<dbReference type="SMR" id="A7MJA9"/>
<dbReference type="GeneID" id="98390389"/>
<dbReference type="KEGG" id="esa:ESA_03651"/>
<dbReference type="HOGENOM" id="CLU_158040_3_0_6"/>
<dbReference type="Proteomes" id="UP000000260">
    <property type="component" value="Chromosome"/>
</dbReference>
<dbReference type="GO" id="GO:0003700">
    <property type="term" value="F:DNA-binding transcription factor activity"/>
    <property type="evidence" value="ECO:0007669"/>
    <property type="project" value="UniProtKB-UniRule"/>
</dbReference>
<dbReference type="GO" id="GO:0043565">
    <property type="term" value="F:sequence-specific DNA binding"/>
    <property type="evidence" value="ECO:0007669"/>
    <property type="project" value="InterPro"/>
</dbReference>
<dbReference type="FunFam" id="1.10.10.60:FF:000006">
    <property type="entry name" value="DNA-binding protein Fis"/>
    <property type="match status" value="1"/>
</dbReference>
<dbReference type="Gene3D" id="1.10.10.60">
    <property type="entry name" value="Homeodomain-like"/>
    <property type="match status" value="1"/>
</dbReference>
<dbReference type="HAMAP" id="MF_00166">
    <property type="entry name" value="DNA_binding_Fis"/>
    <property type="match status" value="1"/>
</dbReference>
<dbReference type="InterPro" id="IPR005412">
    <property type="entry name" value="Fis_DNA-bd"/>
</dbReference>
<dbReference type="InterPro" id="IPR009057">
    <property type="entry name" value="Homeodomain-like_sf"/>
</dbReference>
<dbReference type="InterPro" id="IPR002197">
    <property type="entry name" value="HTH_Fis"/>
</dbReference>
<dbReference type="InterPro" id="IPR050207">
    <property type="entry name" value="Trans_regulatory_Fis"/>
</dbReference>
<dbReference type="NCBIfam" id="NF001659">
    <property type="entry name" value="PRK00430.1"/>
    <property type="match status" value="1"/>
</dbReference>
<dbReference type="PANTHER" id="PTHR47918">
    <property type="entry name" value="DNA-BINDING PROTEIN FIS"/>
    <property type="match status" value="1"/>
</dbReference>
<dbReference type="PANTHER" id="PTHR47918:SF1">
    <property type="entry name" value="DNA-BINDING PROTEIN FIS"/>
    <property type="match status" value="1"/>
</dbReference>
<dbReference type="Pfam" id="PF02954">
    <property type="entry name" value="HTH_8"/>
    <property type="match status" value="1"/>
</dbReference>
<dbReference type="PIRSF" id="PIRSF002097">
    <property type="entry name" value="DNA-binding_Fis"/>
    <property type="match status" value="1"/>
</dbReference>
<dbReference type="PRINTS" id="PR01591">
    <property type="entry name" value="DNABINDNGFIS"/>
</dbReference>
<dbReference type="PRINTS" id="PR01590">
    <property type="entry name" value="HTHFIS"/>
</dbReference>
<dbReference type="SUPFAM" id="SSF46689">
    <property type="entry name" value="Homeodomain-like"/>
    <property type="match status" value="1"/>
</dbReference>
<evidence type="ECO:0000255" key="1">
    <source>
        <dbReference type="HAMAP-Rule" id="MF_00166"/>
    </source>
</evidence>
<protein>
    <recommendedName>
        <fullName evidence="1">DNA-binding protein Fis</fullName>
    </recommendedName>
</protein>
<sequence length="98" mass="11240">MFEQRVNSDVLTVSTVNSQDQVTQKPLRDSVKQALKNYFAQLNGQDVNDLYELVLAEVEQPLLDMVMQYTRGNQTRAALMMGINRGTLRKKLKKYGMN</sequence>
<reference key="1">
    <citation type="journal article" date="2010" name="PLoS ONE">
        <title>Genome sequence of Cronobacter sakazakii BAA-894 and comparative genomic hybridization analysis with other Cronobacter species.</title>
        <authorList>
            <person name="Kucerova E."/>
            <person name="Clifton S.W."/>
            <person name="Xia X.Q."/>
            <person name="Long F."/>
            <person name="Porwollik S."/>
            <person name="Fulton L."/>
            <person name="Fronick C."/>
            <person name="Minx P."/>
            <person name="Kyung K."/>
            <person name="Warren W."/>
            <person name="Fulton R."/>
            <person name="Feng D."/>
            <person name="Wollam A."/>
            <person name="Shah N."/>
            <person name="Bhonagiri V."/>
            <person name="Nash W.E."/>
            <person name="Hallsworth-Pepin K."/>
            <person name="Wilson R.K."/>
            <person name="McClelland M."/>
            <person name="Forsythe S.J."/>
        </authorList>
    </citation>
    <scope>NUCLEOTIDE SEQUENCE [LARGE SCALE GENOMIC DNA]</scope>
    <source>
        <strain>ATCC BAA-894</strain>
    </source>
</reference>
<proteinExistence type="inferred from homology"/>
<feature type="chain" id="PRO_1000023326" description="DNA-binding protein Fis">
    <location>
        <begin position="1"/>
        <end position="98"/>
    </location>
</feature>
<feature type="DNA-binding region" description="H-T-H motif" evidence="1">
    <location>
        <begin position="74"/>
        <end position="93"/>
    </location>
</feature>
<keyword id="KW-0010">Activator</keyword>
<keyword id="KW-0238">DNA-binding</keyword>
<keyword id="KW-1185">Reference proteome</keyword>
<keyword id="KW-0804">Transcription</keyword>
<keyword id="KW-0805">Transcription regulation</keyword>
<gene>
    <name evidence="1" type="primary">fis</name>
    <name type="ordered locus">ESA_03651</name>
</gene>
<accession>A7MJA9</accession>
<name>FIS_CROS8</name>